<keyword id="KW-0997">Cell inner membrane</keyword>
<keyword id="KW-1003">Cell membrane</keyword>
<keyword id="KW-0143">Chaperone</keyword>
<keyword id="KW-1015">Disulfide bond</keyword>
<keyword id="KW-0249">Electron transport</keyword>
<keyword id="KW-0472">Membrane</keyword>
<keyword id="KW-0560">Oxidoreductase</keyword>
<keyword id="KW-0676">Redox-active center</keyword>
<keyword id="KW-1185">Reference proteome</keyword>
<keyword id="KW-0812">Transmembrane</keyword>
<keyword id="KW-1133">Transmembrane helix</keyword>
<keyword id="KW-0813">Transport</keyword>
<proteinExistence type="inferred from homology"/>
<feature type="chain" id="PRO_0000298408" description="Disulfide bond formation protein B">
    <location>
        <begin position="1"/>
        <end position="169"/>
    </location>
</feature>
<feature type="topological domain" description="Cytoplasmic" evidence="1">
    <location>
        <begin position="1"/>
        <end position="13"/>
    </location>
</feature>
<feature type="transmembrane region" description="Helical" evidence="1">
    <location>
        <begin position="14"/>
        <end position="30"/>
    </location>
</feature>
<feature type="topological domain" description="Periplasmic" evidence="1">
    <location>
        <begin position="31"/>
        <end position="48"/>
    </location>
</feature>
<feature type="transmembrane region" description="Helical" evidence="1">
    <location>
        <begin position="49"/>
        <end position="64"/>
    </location>
</feature>
<feature type="topological domain" description="Cytoplasmic" evidence="1">
    <location>
        <begin position="65"/>
        <end position="71"/>
    </location>
</feature>
<feature type="transmembrane region" description="Helical" evidence="1">
    <location>
        <begin position="72"/>
        <end position="89"/>
    </location>
</feature>
<feature type="topological domain" description="Periplasmic" evidence="1">
    <location>
        <begin position="90"/>
        <end position="144"/>
    </location>
</feature>
<feature type="transmembrane region" description="Helical" evidence="1">
    <location>
        <begin position="145"/>
        <end position="163"/>
    </location>
</feature>
<feature type="topological domain" description="Cytoplasmic" evidence="1">
    <location>
        <begin position="164"/>
        <end position="169"/>
    </location>
</feature>
<feature type="disulfide bond" description="Redox-active" evidence="1">
    <location>
        <begin position="40"/>
        <end position="43"/>
    </location>
</feature>
<feature type="disulfide bond" description="Redox-active" evidence="1">
    <location>
        <begin position="104"/>
        <end position="130"/>
    </location>
</feature>
<name>DSBB_SHEFN</name>
<comment type="function">
    <text evidence="1">Required for disulfide bond formation in some periplasmic proteins. Acts by oxidizing the DsbA protein.</text>
</comment>
<comment type="subcellular location">
    <subcellularLocation>
        <location evidence="1">Cell inner membrane</location>
        <topology evidence="1">Multi-pass membrane protein</topology>
    </subcellularLocation>
</comment>
<comment type="similarity">
    <text evidence="1">Belongs to the DsbB family.</text>
</comment>
<reference key="1">
    <citation type="submission" date="2006-08" db="EMBL/GenBank/DDBJ databases">
        <title>Complete sequence of Shewanella frigidimarina NCIMB 400.</title>
        <authorList>
            <consortium name="US DOE Joint Genome Institute"/>
            <person name="Copeland A."/>
            <person name="Lucas S."/>
            <person name="Lapidus A."/>
            <person name="Barry K."/>
            <person name="Detter J.C."/>
            <person name="Glavina del Rio T."/>
            <person name="Hammon N."/>
            <person name="Israni S."/>
            <person name="Dalin E."/>
            <person name="Tice H."/>
            <person name="Pitluck S."/>
            <person name="Fredrickson J.K."/>
            <person name="Kolker E."/>
            <person name="McCuel L.A."/>
            <person name="DiChristina T."/>
            <person name="Nealson K.H."/>
            <person name="Newman D."/>
            <person name="Tiedje J.M."/>
            <person name="Zhou J."/>
            <person name="Romine M.F."/>
            <person name="Culley D.E."/>
            <person name="Serres M."/>
            <person name="Chertkov O."/>
            <person name="Brettin T."/>
            <person name="Bruce D."/>
            <person name="Han C."/>
            <person name="Tapia R."/>
            <person name="Gilna P."/>
            <person name="Schmutz J."/>
            <person name="Larimer F."/>
            <person name="Land M."/>
            <person name="Hauser L."/>
            <person name="Kyrpides N."/>
            <person name="Mikhailova N."/>
            <person name="Richardson P."/>
        </authorList>
    </citation>
    <scope>NUCLEOTIDE SEQUENCE [LARGE SCALE GENOMIC DNA]</scope>
    <source>
        <strain>NCIMB 400</strain>
    </source>
</reference>
<dbReference type="EMBL" id="CP000447">
    <property type="protein sequence ID" value="ABI71591.1"/>
    <property type="molecule type" value="Genomic_DNA"/>
</dbReference>
<dbReference type="RefSeq" id="WP_011637207.1">
    <property type="nucleotide sequence ID" value="NC_008345.1"/>
</dbReference>
<dbReference type="SMR" id="Q083H4"/>
<dbReference type="STRING" id="318167.Sfri_1741"/>
<dbReference type="KEGG" id="sfr:Sfri_1741"/>
<dbReference type="eggNOG" id="COG1495">
    <property type="taxonomic scope" value="Bacteria"/>
</dbReference>
<dbReference type="HOGENOM" id="CLU_098660_2_0_6"/>
<dbReference type="OrthoDB" id="3711263at2"/>
<dbReference type="Proteomes" id="UP000000684">
    <property type="component" value="Chromosome"/>
</dbReference>
<dbReference type="GO" id="GO:0005886">
    <property type="term" value="C:plasma membrane"/>
    <property type="evidence" value="ECO:0007669"/>
    <property type="project" value="UniProtKB-SubCell"/>
</dbReference>
<dbReference type="GO" id="GO:0009055">
    <property type="term" value="F:electron transfer activity"/>
    <property type="evidence" value="ECO:0007669"/>
    <property type="project" value="UniProtKB-UniRule"/>
</dbReference>
<dbReference type="GO" id="GO:0015035">
    <property type="term" value="F:protein-disulfide reductase activity"/>
    <property type="evidence" value="ECO:0007669"/>
    <property type="project" value="UniProtKB-UniRule"/>
</dbReference>
<dbReference type="GO" id="GO:0006457">
    <property type="term" value="P:protein folding"/>
    <property type="evidence" value="ECO:0007669"/>
    <property type="project" value="InterPro"/>
</dbReference>
<dbReference type="Gene3D" id="1.20.1550.10">
    <property type="entry name" value="DsbB-like"/>
    <property type="match status" value="1"/>
</dbReference>
<dbReference type="HAMAP" id="MF_00286">
    <property type="entry name" value="DsbB"/>
    <property type="match status" value="1"/>
</dbReference>
<dbReference type="InterPro" id="IPR003752">
    <property type="entry name" value="DiS_bond_form_DsbB/BdbC"/>
</dbReference>
<dbReference type="InterPro" id="IPR022920">
    <property type="entry name" value="Disulphide_bond_form_DsbB"/>
</dbReference>
<dbReference type="InterPro" id="IPR050183">
    <property type="entry name" value="DsbB"/>
</dbReference>
<dbReference type="InterPro" id="IPR023380">
    <property type="entry name" value="DsbB-like_sf"/>
</dbReference>
<dbReference type="NCBIfam" id="NF002485">
    <property type="entry name" value="PRK01749.1"/>
    <property type="match status" value="1"/>
</dbReference>
<dbReference type="PANTHER" id="PTHR36570">
    <property type="entry name" value="DISULFIDE BOND FORMATION PROTEIN B"/>
    <property type="match status" value="1"/>
</dbReference>
<dbReference type="PANTHER" id="PTHR36570:SF2">
    <property type="entry name" value="DISULFIDE BOND FORMATION PROTEIN B"/>
    <property type="match status" value="1"/>
</dbReference>
<dbReference type="Pfam" id="PF02600">
    <property type="entry name" value="DsbB"/>
    <property type="match status" value="1"/>
</dbReference>
<dbReference type="SUPFAM" id="SSF158442">
    <property type="entry name" value="DsbB-like"/>
    <property type="match status" value="1"/>
</dbReference>
<organism>
    <name type="scientific">Shewanella frigidimarina (strain NCIMB 400)</name>
    <dbReference type="NCBI Taxonomy" id="318167"/>
    <lineage>
        <taxon>Bacteria</taxon>
        <taxon>Pseudomonadati</taxon>
        <taxon>Pseudomonadota</taxon>
        <taxon>Gammaproteobacteria</taxon>
        <taxon>Alteromonadales</taxon>
        <taxon>Shewanellaceae</taxon>
        <taxon>Shewanella</taxon>
    </lineage>
</organism>
<evidence type="ECO:0000255" key="1">
    <source>
        <dbReference type="HAMAP-Rule" id="MF_00286"/>
    </source>
</evidence>
<protein>
    <recommendedName>
        <fullName evidence="1">Disulfide bond formation protein B</fullName>
    </recommendedName>
    <alternativeName>
        <fullName evidence="1">Disulfide oxidoreductase</fullName>
    </alternativeName>
</protein>
<sequence length="169" mass="18913">MSQLQQFCHNRFSWGLLLLSAIGLELAALFFQYGMDLAPCVMCIYIRVAVLGIILAALIGILQPKVWLLRLVGMAGWAVSAVWGFKLAYELNQMQVNPSPFATCSFYPEFPSFMPLDTWLPSVFSPTGMCSDSPWSWLSVSMAQWMMLGFAIYGVIWLLMLLPALKSAK</sequence>
<accession>Q083H4</accession>
<gene>
    <name evidence="1" type="primary">dsbB</name>
    <name type="ordered locus">Sfri_1741</name>
</gene>